<gene>
    <name type="primary">GSR</name>
    <name type="synonym">GLUR</name>
    <name type="synonym">GRD1</name>
</gene>
<protein>
    <recommendedName>
        <fullName>Glutathione reductase, mitochondrial</fullName>
        <shortName>GR</shortName>
        <shortName>GRase</shortName>
        <ecNumber evidence="4">1.8.1.7</ecNumber>
    </recommendedName>
</protein>
<proteinExistence type="evidence at protein level"/>
<feature type="transit peptide" description="Mitochondrion" evidence="2">
    <location>
        <begin position="1"/>
        <end position="43"/>
    </location>
</feature>
<feature type="chain" id="PRO_0000030276" description="Glutathione reductase, mitochondrial">
    <location>
        <begin position="44"/>
        <end position="522"/>
    </location>
</feature>
<feature type="active site" description="Proton acceptor" evidence="3 5 28">
    <location>
        <position position="511"/>
    </location>
</feature>
<feature type="binding site" evidence="3 5 6 7 8 9 10 15 17 18 20 23 24 25 26 28 29 30 32 34 35 36 37 38 40">
    <location>
        <position position="74"/>
    </location>
    <ligand>
        <name>FAD</name>
        <dbReference type="ChEBI" id="CHEBI:57692"/>
    </ligand>
</feature>
<feature type="binding site" evidence="5 6 10 16 19 24 33">
    <location>
        <position position="74"/>
    </location>
    <ligand>
        <name>glutathione</name>
        <dbReference type="ChEBI" id="CHEBI:57925"/>
    </ligand>
</feature>
<feature type="binding site" evidence="3 5 6 7 8 9 10 15 16 17 18 19 20 21 22 23 24 25 26 27 28 29 30 31 32 33 34 35 36 37 38 40">
    <location>
        <position position="75"/>
    </location>
    <ligand>
        <name>FAD</name>
        <dbReference type="ChEBI" id="CHEBI:57692"/>
    </ligand>
</feature>
<feature type="binding site" evidence="5 6 10 16 17 19 24">
    <location>
        <position position="81"/>
    </location>
    <ligand>
        <name>glutathione</name>
        <dbReference type="ChEBI" id="CHEBI:57925"/>
    </ligand>
</feature>
<feature type="binding site" evidence="3 5 6 7 8 9 10 15 16 17 18 19 20 21 22 23 24 25 26 27 28 29 30 31 32 33 34 35 36 37 38 40">
    <location>
        <position position="94"/>
    </location>
    <ligand>
        <name>FAD</name>
        <dbReference type="ChEBI" id="CHEBI:57692"/>
    </ligand>
</feature>
<feature type="binding site" evidence="3 5 6 7 8 9 10 15 16 17 18 19 20 21 22 23 24 25 26 27 28 29 30 31 32 33 34 35 36 37 38 40">
    <location>
        <position position="101"/>
    </location>
    <ligand>
        <name>FAD</name>
        <dbReference type="ChEBI" id="CHEBI:57692"/>
    </ligand>
</feature>
<feature type="binding site" evidence="3 5 6 7 8 9 10 15 17 21 23 25 27 29 31 32 34 35 36 37 40">
    <location>
        <position position="102"/>
    </location>
    <ligand>
        <name>FAD</name>
        <dbReference type="ChEBI" id="CHEBI:57692"/>
    </ligand>
</feature>
<feature type="binding site" evidence="3 5 6 7 8 9 10 15 16 17 18 19 20 21 22 23 24 25 26 27 28 29 30 31 32 33 34 35 36 37 38 40">
    <location>
        <position position="110"/>
    </location>
    <ligand>
        <name>FAD</name>
        <dbReference type="ChEBI" id="CHEBI:57692"/>
    </ligand>
</feature>
<feature type="binding site" evidence="5 6 10 16 17 19 24 32 33">
    <location>
        <position position="158"/>
    </location>
    <ligand>
        <name>glutathione</name>
        <dbReference type="ChEBI" id="CHEBI:57925"/>
    </ligand>
</feature>
<feature type="binding site" evidence="3 5 6 7 8 9 10 15 16 17 18 19 20 21 22 23 24 25 26 27 28 29 30 31 32 33 34 35 36 37 38 40">
    <location>
        <position position="174"/>
    </location>
    <ligand>
        <name>FAD</name>
        <dbReference type="ChEBI" id="CHEBI:57692"/>
    </ligand>
</feature>
<feature type="binding site" evidence="5 6 18 30 31">
    <location>
        <position position="239"/>
    </location>
    <ligand>
        <name>NADP(+)</name>
        <dbReference type="ChEBI" id="CHEBI:58349"/>
    </ligand>
</feature>
<feature type="binding site" evidence="5 6 18 30 31">
    <location>
        <position position="242"/>
    </location>
    <ligand>
        <name>NADP(+)</name>
        <dbReference type="ChEBI" id="CHEBI:58349"/>
    </ligand>
</feature>
<feature type="binding site" evidence="5 6 30 31">
    <location>
        <position position="245"/>
    </location>
    <ligand>
        <name>NADP(+)</name>
        <dbReference type="ChEBI" id="CHEBI:58349"/>
    </ligand>
</feature>
<feature type="binding site" evidence="5 6 18 30 31">
    <location>
        <position position="262"/>
    </location>
    <ligand>
        <name>NADP(+)</name>
        <dbReference type="ChEBI" id="CHEBI:58349"/>
    </ligand>
</feature>
<feature type="binding site" evidence="5 6 18 30 31">
    <location>
        <position position="268"/>
    </location>
    <ligand>
        <name>NADP(+)</name>
        <dbReference type="ChEBI" id="CHEBI:58349"/>
    </ligand>
</feature>
<feature type="binding site" evidence="5 6 18 30 31">
    <location>
        <position position="334"/>
    </location>
    <ligand>
        <name>NADP(+)</name>
        <dbReference type="ChEBI" id="CHEBI:58349"/>
    </ligand>
</feature>
<feature type="binding site" evidence="3 5 6 7 8 9 10 15 16 17 18 19 20 21 22 23 24 25 26 27 28 29 30 31 32 33 34 35 36 37 38 40">
    <location>
        <position position="375"/>
    </location>
    <ligand>
        <name>FAD</name>
        <dbReference type="ChEBI" id="CHEBI:57692"/>
    </ligand>
</feature>
<feature type="binding site" evidence="5 6 18 30">
    <location>
        <position position="381"/>
    </location>
    <ligand>
        <name>NADP(+)</name>
        <dbReference type="ChEBI" id="CHEBI:58349"/>
    </ligand>
</feature>
<feature type="binding site" evidence="3 5 6 7 8 9 10 15 16 17 18 19 20 21 22 23 24 25 26 27 28 29 30 31 32 33 34 35 36 37 38 40">
    <location>
        <position position="383"/>
    </location>
    <ligand>
        <name>FAD</name>
        <dbReference type="ChEBI" id="CHEBI:57692"/>
    </ligand>
</feature>
<feature type="binding site" evidence="5 6 10 16 17 19 24 32 33">
    <location>
        <position position="391"/>
    </location>
    <ligand>
        <name>glutathione</name>
        <dbReference type="ChEBI" id="CHEBI:57925"/>
    </ligand>
</feature>
<feature type="binding site" evidence="5 6 30">
    <location>
        <position position="414"/>
    </location>
    <ligand>
        <name>NADP(+)</name>
        <dbReference type="ChEBI" id="CHEBI:58349"/>
    </ligand>
</feature>
<feature type="binding site" evidence="3 5 6 7 8 9 10 15 16 17 18 19 20 21 22 23 24 25 26 27 28 29 30 31 32 33 34 35 37 38 40">
    <location>
        <position position="511"/>
    </location>
    <ligand>
        <name>FAD</name>
        <dbReference type="ChEBI" id="CHEBI:57692"/>
    </ligand>
</feature>
<feature type="modified residue" description="N6-acetyllysine" evidence="1">
    <location>
        <position position="97"/>
    </location>
</feature>
<feature type="disulfide bond" description="Redox-active" evidence="3 5 6 7 8 9 10 15 17 23 25 26 29 32 34 35 36 37 38 40">
    <location>
        <begin position="102"/>
        <end position="107"/>
    </location>
</feature>
<feature type="disulfide bond" description="Interchain" evidence="8 28 37">
    <location>
        <position position="134"/>
    </location>
</feature>
<feature type="splice variant" id="VSP_018972" description="In isoform Cytoplasmic." evidence="13">
    <location>
        <begin position="1"/>
        <end position="43"/>
    </location>
</feature>
<feature type="splice variant" id="VSP_042908" description="In isoform 2 and isoform 4." evidence="12">
    <location>
        <begin position="266"/>
        <end position="294"/>
    </location>
</feature>
<feature type="splice variant" id="VSP_042909" description="In isoform 3 and isoform 4." evidence="12">
    <location>
        <begin position="295"/>
        <end position="347"/>
    </location>
</feature>
<feature type="sequence variant" id="VAR_019079" description="In dbSNP:rs8190955." evidence="11">
    <original>R</original>
    <variation>C</variation>
    <location>
        <position position="153"/>
    </location>
</feature>
<feature type="sequence variant" id="VAR_051775" description="In dbSNP:rs8190976.">
    <original>G</original>
    <variation>R</variation>
    <location>
        <position position="232"/>
    </location>
</feature>
<feature type="sequence variant" id="VAR_019080" description="In dbSNP:rs8190976." evidence="11">
    <original>G</original>
    <variation>S</variation>
    <location>
        <position position="232"/>
    </location>
</feature>
<feature type="sequence variant" id="VAR_019081" description="In dbSNP:rs8190997." evidence="11">
    <original>I</original>
    <variation>V</variation>
    <location>
        <position position="261"/>
    </location>
</feature>
<feature type="sequence variant" id="VAR_019082" description="In dbSNP:rs8191004." evidence="11">
    <original>E</original>
    <variation>D</variation>
    <location>
        <position position="297"/>
    </location>
</feature>
<feature type="sequence variant" id="VAR_014554" description="In dbSNP:rs2020916.">
    <original>P</original>
    <variation>H</variation>
    <location>
        <position position="314"/>
    </location>
</feature>
<feature type="sequence variant" id="VAR_083444" description="In CNSHA10." evidence="4">
    <location>
        <begin position="331"/>
        <end position="522"/>
    </location>
</feature>
<feature type="sequence variant" id="VAR_083445" description="In CNSHA10; decreased glutathione reductase activity; decreased enzyme stability; dbSNP:rs1586033745." evidence="4">
    <original>G</original>
    <variation>A</variation>
    <location>
        <position position="374"/>
    </location>
</feature>
<feature type="strand" evidence="42">
    <location>
        <begin position="62"/>
        <end position="64"/>
    </location>
</feature>
<feature type="strand" evidence="42">
    <location>
        <begin position="66"/>
        <end position="70"/>
    </location>
</feature>
<feature type="helix" evidence="42">
    <location>
        <begin position="74"/>
        <end position="85"/>
    </location>
</feature>
<feature type="strand" evidence="42">
    <location>
        <begin position="90"/>
        <end position="96"/>
    </location>
</feature>
<feature type="helix" evidence="42">
    <location>
        <begin position="100"/>
        <end position="105"/>
    </location>
</feature>
<feature type="helix" evidence="42">
    <location>
        <begin position="107"/>
        <end position="123"/>
    </location>
</feature>
<feature type="turn" evidence="42">
    <location>
        <begin position="124"/>
        <end position="130"/>
    </location>
</feature>
<feature type="helix" evidence="42">
    <location>
        <begin position="140"/>
        <end position="164"/>
    </location>
</feature>
<feature type="strand" evidence="42">
    <location>
        <begin position="168"/>
        <end position="172"/>
    </location>
</feature>
<feature type="strand" evidence="42">
    <location>
        <begin position="174"/>
        <end position="176"/>
    </location>
</feature>
<feature type="strand" evidence="42">
    <location>
        <begin position="183"/>
        <end position="186"/>
    </location>
</feature>
<feature type="strand" evidence="42">
    <location>
        <begin position="189"/>
        <end position="192"/>
    </location>
</feature>
<feature type="strand" evidence="42">
    <location>
        <begin position="196"/>
        <end position="198"/>
    </location>
</feature>
<feature type="strand" evidence="42">
    <location>
        <begin position="202"/>
        <end position="204"/>
    </location>
</feature>
<feature type="turn" evidence="42">
    <location>
        <begin position="209"/>
        <end position="211"/>
    </location>
</feature>
<feature type="helix" evidence="42">
    <location>
        <begin position="215"/>
        <end position="217"/>
    </location>
</feature>
<feature type="helix" evidence="42">
    <location>
        <begin position="221"/>
        <end position="224"/>
    </location>
</feature>
<feature type="strand" evidence="42">
    <location>
        <begin position="232"/>
        <end position="237"/>
    </location>
</feature>
<feature type="helix" evidence="42">
    <location>
        <begin position="241"/>
        <end position="252"/>
    </location>
</feature>
<feature type="strand" evidence="42">
    <location>
        <begin position="256"/>
        <end position="260"/>
    </location>
</feature>
<feature type="strand" evidence="42">
    <location>
        <begin position="262"/>
        <end position="266"/>
    </location>
</feature>
<feature type="helix" evidence="42">
    <location>
        <begin position="272"/>
        <end position="284"/>
    </location>
</feature>
<feature type="strand" evidence="42">
    <location>
        <begin position="288"/>
        <end position="290"/>
    </location>
</feature>
<feature type="strand" evidence="42">
    <location>
        <begin position="293"/>
        <end position="300"/>
    </location>
</feature>
<feature type="strand" evidence="42">
    <location>
        <begin position="302"/>
        <end position="311"/>
    </location>
</feature>
<feature type="strand" evidence="42">
    <location>
        <begin position="319"/>
        <end position="331"/>
    </location>
</feature>
<feature type="strand" evidence="42">
    <location>
        <begin position="335"/>
        <end position="338"/>
    </location>
</feature>
<feature type="turn" evidence="43">
    <location>
        <begin position="340"/>
        <end position="343"/>
    </location>
</feature>
<feature type="helix" evidence="42">
    <location>
        <begin position="344"/>
        <end position="347"/>
    </location>
</feature>
<feature type="strand" evidence="42">
    <location>
        <begin position="370"/>
        <end position="372"/>
    </location>
</feature>
<feature type="helix" evidence="42">
    <location>
        <begin position="374"/>
        <end position="377"/>
    </location>
</feature>
<feature type="helix" evidence="42">
    <location>
        <begin position="383"/>
        <end position="398"/>
    </location>
</feature>
<feature type="strand" evidence="42">
    <location>
        <begin position="413"/>
        <end position="415"/>
    </location>
</feature>
<feature type="strand" evidence="41">
    <location>
        <begin position="417"/>
        <end position="419"/>
    </location>
</feature>
<feature type="strand" evidence="42">
    <location>
        <begin position="421"/>
        <end position="425"/>
    </location>
</feature>
<feature type="helix" evidence="42">
    <location>
        <begin position="428"/>
        <end position="435"/>
    </location>
</feature>
<feature type="helix" evidence="42">
    <location>
        <begin position="437"/>
        <end position="439"/>
    </location>
</feature>
<feature type="strand" evidence="42">
    <location>
        <begin position="440"/>
        <end position="447"/>
    </location>
</feature>
<feature type="helix" evidence="42">
    <location>
        <begin position="450"/>
        <end position="454"/>
    </location>
</feature>
<feature type="strand" evidence="42">
    <location>
        <begin position="461"/>
        <end position="468"/>
    </location>
</feature>
<feature type="turn" evidence="42">
    <location>
        <begin position="469"/>
        <end position="472"/>
    </location>
</feature>
<feature type="strand" evidence="42">
    <location>
        <begin position="473"/>
        <end position="481"/>
    </location>
</feature>
<feature type="helix" evidence="42">
    <location>
        <begin position="484"/>
        <end position="496"/>
    </location>
</feature>
<feature type="helix" evidence="42">
    <location>
        <begin position="501"/>
        <end position="505"/>
    </location>
</feature>
<feature type="strand" evidence="42">
    <location>
        <begin position="511"/>
        <end position="514"/>
    </location>
</feature>
<feature type="helix" evidence="42">
    <location>
        <begin position="515"/>
        <end position="519"/>
    </location>
</feature>
<reference key="1">
    <citation type="journal article" date="1990" name="Eur. J. Biochem.">
        <title>Cloning and sequencing of mammalian glutathione reductase cDNA.</title>
        <authorList>
            <person name="Tutic M."/>
            <person name="Lu X.A."/>
            <person name="Schirmer R.H."/>
            <person name="Werner D."/>
        </authorList>
    </citation>
    <scope>NUCLEOTIDE SEQUENCE [MRNA] (ISOFORM CYTOPLASMIC)</scope>
    <source>
        <tissue>Placenta</tissue>
    </source>
</reference>
<reference key="2">
    <citation type="journal article" date="2000" name="Biochem. Biophys. Res. Commun.">
        <title>Structural organization of the human glutathione reductase (GSR) gene: determination of correct cDNA sequence and identification of a mitochondrial leader sequence.</title>
        <authorList>
            <person name="Kelner M.J."/>
            <person name="Montoya M.A."/>
        </authorList>
    </citation>
    <scope>NUCLEOTIDE SEQUENCE [GENOMIC DNA / MRNA] (ISOFORM MITOCHONDRIAL)</scope>
    <scope>ALTERNATIVE INITIATION</scope>
</reference>
<reference key="3">
    <citation type="submission" date="2003-07" db="EMBL/GenBank/DDBJ databases">
        <authorList>
            <consortium name="NIEHS SNPs program"/>
        </authorList>
    </citation>
    <scope>NUCLEOTIDE SEQUENCE [GENOMIC DNA]</scope>
    <scope>VARIANTS CYS-153; SER-232; VAL-261 AND ASP-297</scope>
</reference>
<reference key="4">
    <citation type="journal article" date="2010" name="Biochem. Genet.">
        <title>Expression of glutathione reductase splice variants in human tissues.</title>
        <authorList>
            <person name="Satoh N."/>
            <person name="Watanabe N."/>
            <person name="Kanda A."/>
            <person name="Sugaya-Fukazawa M."/>
            <person name="Hisatomi H."/>
        </authorList>
    </citation>
    <scope>NUCLEOTIDE SEQUENCE [MRNA] (ISOFORMS 2; 3 AND 4)</scope>
    <scope>ALTERNATIVE SPLICING</scope>
    <scope>TISSUE SPECIFICITY</scope>
</reference>
<reference key="5">
    <citation type="journal article" date="2006" name="Nature">
        <title>DNA sequence and analysis of human chromosome 8.</title>
        <authorList>
            <person name="Nusbaum C."/>
            <person name="Mikkelsen T.S."/>
            <person name="Zody M.C."/>
            <person name="Asakawa S."/>
            <person name="Taudien S."/>
            <person name="Garber M."/>
            <person name="Kodira C.D."/>
            <person name="Schueler M.G."/>
            <person name="Shimizu A."/>
            <person name="Whittaker C.A."/>
            <person name="Chang J.L."/>
            <person name="Cuomo C.A."/>
            <person name="Dewar K."/>
            <person name="FitzGerald M.G."/>
            <person name="Yang X."/>
            <person name="Allen N.R."/>
            <person name="Anderson S."/>
            <person name="Asakawa T."/>
            <person name="Blechschmidt K."/>
            <person name="Bloom T."/>
            <person name="Borowsky M.L."/>
            <person name="Butler J."/>
            <person name="Cook A."/>
            <person name="Corum B."/>
            <person name="DeArellano K."/>
            <person name="DeCaprio D."/>
            <person name="Dooley K.T."/>
            <person name="Dorris L. III"/>
            <person name="Engels R."/>
            <person name="Gloeckner G."/>
            <person name="Hafez N."/>
            <person name="Hagopian D.S."/>
            <person name="Hall J.L."/>
            <person name="Ishikawa S.K."/>
            <person name="Jaffe D.B."/>
            <person name="Kamat A."/>
            <person name="Kudoh J."/>
            <person name="Lehmann R."/>
            <person name="Lokitsang T."/>
            <person name="Macdonald P."/>
            <person name="Major J.E."/>
            <person name="Matthews C.D."/>
            <person name="Mauceli E."/>
            <person name="Menzel U."/>
            <person name="Mihalev A.H."/>
            <person name="Minoshima S."/>
            <person name="Murayama Y."/>
            <person name="Naylor J.W."/>
            <person name="Nicol R."/>
            <person name="Nguyen C."/>
            <person name="O'Leary S.B."/>
            <person name="O'Neill K."/>
            <person name="Parker S.C.J."/>
            <person name="Polley A."/>
            <person name="Raymond C.K."/>
            <person name="Reichwald K."/>
            <person name="Rodriguez J."/>
            <person name="Sasaki T."/>
            <person name="Schilhabel M."/>
            <person name="Siddiqui R."/>
            <person name="Smith C.L."/>
            <person name="Sneddon T.P."/>
            <person name="Talamas J.A."/>
            <person name="Tenzin P."/>
            <person name="Topham K."/>
            <person name="Venkataraman V."/>
            <person name="Wen G."/>
            <person name="Yamazaki S."/>
            <person name="Young S.K."/>
            <person name="Zeng Q."/>
            <person name="Zimmer A.R."/>
            <person name="Rosenthal A."/>
            <person name="Birren B.W."/>
            <person name="Platzer M."/>
            <person name="Shimizu N."/>
            <person name="Lander E.S."/>
        </authorList>
    </citation>
    <scope>NUCLEOTIDE SEQUENCE [LARGE SCALE GENOMIC DNA]</scope>
</reference>
<reference key="6">
    <citation type="submission" date="2005-09" db="EMBL/GenBank/DDBJ databases">
        <authorList>
            <person name="Mural R.J."/>
            <person name="Istrail S."/>
            <person name="Sutton G.G."/>
            <person name="Florea L."/>
            <person name="Halpern A.L."/>
            <person name="Mobarry C.M."/>
            <person name="Lippert R."/>
            <person name="Walenz B."/>
            <person name="Shatkay H."/>
            <person name="Dew I."/>
            <person name="Miller J.R."/>
            <person name="Flanigan M.J."/>
            <person name="Edwards N.J."/>
            <person name="Bolanos R."/>
            <person name="Fasulo D."/>
            <person name="Halldorsson B.V."/>
            <person name="Hannenhalli S."/>
            <person name="Turner R."/>
            <person name="Yooseph S."/>
            <person name="Lu F."/>
            <person name="Nusskern D.R."/>
            <person name="Shue B.C."/>
            <person name="Zheng X.H."/>
            <person name="Zhong F."/>
            <person name="Delcher A.L."/>
            <person name="Huson D.H."/>
            <person name="Kravitz S.A."/>
            <person name="Mouchard L."/>
            <person name="Reinert K."/>
            <person name="Remington K.A."/>
            <person name="Clark A.G."/>
            <person name="Waterman M.S."/>
            <person name="Eichler E.E."/>
            <person name="Adams M.D."/>
            <person name="Hunkapiller M.W."/>
            <person name="Myers E.W."/>
            <person name="Venter J.C."/>
        </authorList>
    </citation>
    <scope>NUCLEOTIDE SEQUENCE [LARGE SCALE GENOMIC DNA]</scope>
</reference>
<reference key="7">
    <citation type="journal article" date="2004" name="Genome Res.">
        <title>The status, quality, and expansion of the NIH full-length cDNA project: the Mammalian Gene Collection (MGC).</title>
        <authorList>
            <consortium name="The MGC Project Team"/>
        </authorList>
    </citation>
    <scope>NUCLEOTIDE SEQUENCE [LARGE SCALE MRNA] (ISOFORM MITOCHONDRIAL)</scope>
    <source>
        <tissue>Lung</tissue>
    </source>
</reference>
<reference key="8">
    <citation type="journal article" date="1982" name="Eur. J. Biochem.">
        <title>Glutathione reductase from human erythrocytes. The sequences of the NADPH domain and of the interface domain.</title>
        <authorList>
            <person name="Krauth-Siegel R.L."/>
            <person name="Blatterspiel R."/>
            <person name="Saleh M."/>
            <person name="Schiltz E."/>
            <person name="Schirmer R.H."/>
            <person name="Untucht-Grau R."/>
        </authorList>
    </citation>
    <scope>PROTEIN SEQUENCE OF 45-522</scope>
</reference>
<reference key="9">
    <citation type="journal article" date="1977" name="Eur. J. Biochem.">
        <title>Glutathione reductase from human erythrocytes. Isolation of the enzyme and sequence analysis of the redox-active peptide.</title>
        <authorList>
            <person name="Krohne-Ehrich G."/>
            <person name="Schirmer R.H."/>
            <person name="Untucht-Grau R."/>
        </authorList>
    </citation>
    <scope>PROTEIN SEQUENCE OF 98-110</scope>
    <source>
        <tissue>Erythrocyte</tissue>
    </source>
</reference>
<reference key="10">
    <citation type="journal article" date="2005" name="Nat. Biotechnol.">
        <title>Immunoaffinity profiling of tyrosine phosphorylation in cancer cells.</title>
        <authorList>
            <person name="Rush J."/>
            <person name="Moritz A."/>
            <person name="Lee K.A."/>
            <person name="Guo A."/>
            <person name="Goss V.L."/>
            <person name="Spek E.J."/>
            <person name="Zhang H."/>
            <person name="Zha X.-M."/>
            <person name="Polakiewicz R.D."/>
            <person name="Comb M.J."/>
        </authorList>
    </citation>
    <scope>IDENTIFICATION BY MASS SPECTROMETRY [LARGE SCALE ANALYSIS]</scope>
</reference>
<reference key="11">
    <citation type="journal article" date="2011" name="BMC Syst. Biol.">
        <title>Initial characterization of the human central proteome.</title>
        <authorList>
            <person name="Burkard T.R."/>
            <person name="Planyavsky M."/>
            <person name="Kaupe I."/>
            <person name="Breitwieser F.P."/>
            <person name="Buerckstuemmer T."/>
            <person name="Bennett K.L."/>
            <person name="Superti-Furga G."/>
            <person name="Colinge J."/>
        </authorList>
    </citation>
    <scope>IDENTIFICATION BY MASS SPECTROMETRY [LARGE SCALE ANALYSIS]</scope>
</reference>
<reference key="12">
    <citation type="journal article" date="2013" name="J. Proteome Res.">
        <title>Toward a comprehensive characterization of a human cancer cell phosphoproteome.</title>
        <authorList>
            <person name="Zhou H."/>
            <person name="Di Palma S."/>
            <person name="Preisinger C."/>
            <person name="Peng M."/>
            <person name="Polat A.N."/>
            <person name="Heck A.J."/>
            <person name="Mohammed S."/>
        </authorList>
    </citation>
    <scope>IDENTIFICATION BY MASS SPECTROMETRY [LARGE SCALE ANALYSIS]</scope>
    <source>
        <tissue>Erythroleukemia</tissue>
    </source>
</reference>
<reference key="13">
    <citation type="journal article" date="2014" name="J. Proteomics">
        <title>An enzyme assisted RP-RPLC approach for in-depth analysis of human liver phosphoproteome.</title>
        <authorList>
            <person name="Bian Y."/>
            <person name="Song C."/>
            <person name="Cheng K."/>
            <person name="Dong M."/>
            <person name="Wang F."/>
            <person name="Huang J."/>
            <person name="Sun D."/>
            <person name="Wang L."/>
            <person name="Ye M."/>
            <person name="Zou H."/>
        </authorList>
    </citation>
    <scope>IDENTIFICATION BY MASS SPECTROMETRY [LARGE SCALE ANALYSIS]</scope>
    <source>
        <tissue>Liver</tissue>
    </source>
</reference>
<reference key="14">
    <citation type="journal article" date="2015" name="Proteomics">
        <title>N-terminome analysis of the human mitochondrial proteome.</title>
        <authorList>
            <person name="Vaca Jacome A.S."/>
            <person name="Rabilloud T."/>
            <person name="Schaeffer-Reiss C."/>
            <person name="Rompais M."/>
            <person name="Ayoub D."/>
            <person name="Lane L."/>
            <person name="Bairoch A."/>
            <person name="Van Dorsselaer A."/>
            <person name="Carapito C."/>
        </authorList>
    </citation>
    <scope>IDENTIFICATION BY MASS SPECTROMETRY [LARGE SCALE ANALYSIS]</scope>
</reference>
<reference key="15">
    <citation type="journal article" date="2007" name="Blood">
        <title>Molecular basis of glutathione reductase deficiency in human blood cells.</title>
        <authorList>
            <person name="Kamerbeek N.M."/>
            <person name="van Zwieten R."/>
            <person name="de Boer M."/>
            <person name="Morren G."/>
            <person name="Vuil H."/>
            <person name="Bannink N."/>
            <person name="Lincke C."/>
            <person name="Dolman K.M."/>
            <person name="Becker K."/>
            <person name="Schirmer R.H."/>
            <person name="Gromer S."/>
            <person name="Roos D."/>
        </authorList>
    </citation>
    <scope>INVOLVEMENT IN CNSHA10</scope>
    <scope>CATALYTIC ACTIVITY</scope>
    <scope>VARIANTS CNSHA10 331-TRP--ARG-522 DEL AND ALA-374</scope>
    <scope>CHARACTERIZATION OF VARIANT CNSHA10 ALA-374</scope>
</reference>
<reference key="16">
    <citation type="journal article" date="1981" name="J. Mol. Biol.">
        <title>Three-dimensional structure of glutathione reductase at 2-A resolution.</title>
        <authorList>
            <person name="Thieme R."/>
            <person name="Pai E.F."/>
            <person name="Schirmer R.H."/>
            <person name="Schulz G.E."/>
        </authorList>
    </citation>
    <scope>X-RAY CRYSTALLOGRAPHY (2 ANGSTROMS) OF 45-522</scope>
</reference>
<reference evidence="35" key="17">
    <citation type="journal article" date="1987" name="J. Mol. Biol.">
        <title>Refined structure of glutathione reductase at 1.54-A resolution.</title>
        <authorList>
            <person name="Karplus P.A."/>
            <person name="Schulz G.E."/>
        </authorList>
    </citation>
    <scope>X-RAY CRYSTALLOGRAPHY (1.54 ANGSTROMS) OF 45-522 IN COMPLEX WITH FAD</scope>
    <scope>DISULFIDE BOND</scope>
</reference>
<reference evidence="17 18 19 20 21" key="18">
    <citation type="journal article" date="1989" name="J. Mol. Biol.">
        <title>Substrate binding and catalysis by glutathione reductase as derived from refined enzyme: substrate crystal structures at 2 A resolution.</title>
        <authorList>
            <person name="Karplus P.A."/>
            <person name="Schulz G.E."/>
        </authorList>
    </citation>
    <scope>X-RAY CRYSTALLOGRAPHY (1.85 ANGSTROMS) OF 45-522 IN COMPLEX WITH FAD; NADPH AND GLUTATHIONE</scope>
    <scope>DISULFIDE BOND</scope>
</reference>
<reference evidence="26" key="19">
    <citation type="journal article" date="1996" name="J. Biol. Chem.">
        <title>Kinetics and crystallographic analysis of human glutathione reductase in complex with a xanthene inhibitor.</title>
        <authorList>
            <person name="Savvides S.N."/>
            <person name="Karplus P.A."/>
        </authorList>
    </citation>
    <scope>X-RAY CRYSTALLOGRAPHY (2.0 ANGSTROMS) OF 62-522 IN COMPLEX WITH FAD</scope>
    <scope>DISULFIDE BOND</scope>
</reference>
<reference evidence="23 29 36 39 40" key="20">
    <citation type="journal article" date="1997" name="Biochemistry">
        <title>Glutathione reductase turned into trypanothione reductase: structural analysis of an engineered change in substrate specificity.</title>
        <authorList>
            <person name="Stoll V.S."/>
            <person name="Simpson S.J."/>
            <person name="Krauth-Siegel R.L."/>
            <person name="Walsh C.T."/>
            <person name="Pai E.F."/>
        </authorList>
    </citation>
    <scope>X-RAY CRYSTALLOGRAPHY (2.4 ANGSTROMS) OF 62-522 IN COMPLEX WITH FAD</scope>
    <scope>DISULFIDE BOND</scope>
</reference>
<reference evidence="16 24" key="21">
    <citation type="journal article" date="1998" name="Nat. Struct. Biol.">
        <title>Enzyme inactivation through sulfhydryl oxidation by physiologic NO-carriers.</title>
        <authorList>
            <person name="Becker K."/>
            <person name="Savvides S.N."/>
            <person name="Keese M."/>
            <person name="Schirmer R.H."/>
            <person name="Karplus P.A."/>
        </authorList>
    </citation>
    <scope>X-RAY CRYSTALLOGRAPHY (1.7 ANGSTROMS) OF 62-522 IN COMPLEX WITH FAD AND GLUTATHIONE</scope>
    <scope>DISULFIDE BOND</scope>
</reference>
<reference evidence="28" key="22">
    <citation type="journal article" date="2006" name="J. Am. Chem. Soc.">
        <title>A fluoro analogue of the menadione derivative 6-[2'-(3'-methyl)-1',4'-naphthoquinolyl]hexanoic acid is a suicide substrate of glutathione reductase. Crystal structure of the alkylated human enzyme.</title>
        <authorList>
            <person name="Bauer H."/>
            <person name="Fritz-Wolf K."/>
            <person name="Winzer A."/>
            <person name="Kuhner S."/>
            <person name="Little S."/>
            <person name="Yardley V."/>
            <person name="Vezin H."/>
            <person name="Palfey B."/>
            <person name="Schirmer R.H."/>
            <person name="Davioud-Charvet E."/>
        </authorList>
    </citation>
    <scope>X-RAY CRYSTALLOGRAPHY (1.70 ANGSTROMS) OF 45-522 IN COMPLEX WITH FAD</scope>
    <scope>DISULFIDE BOND</scope>
    <scope>ACTIVE SITE</scope>
</reference>
<reference evidence="30 31 32 33 34" key="23">
    <citation type="journal article" date="2008" name="J. Mol. Biol.">
        <title>Catalytic cycle of human glutathione reductase near 1 A resolution.</title>
        <authorList>
            <person name="Berkholz D.S."/>
            <person name="Faber H.R."/>
            <person name="Savvides S.N."/>
            <person name="Karplus P.A."/>
        </authorList>
    </citation>
    <scope>X-RAY CRYSTALLOGRAPHY (0.95 ANGSTROMS) OF 45-522 IN COMPLEX WITH FAD; NADPH AND GLUTATHIONE</scope>
    <scope>ACTIVE SITE</scope>
    <scope>DISULFIDE BOND</scope>
</reference>
<accession>P00390</accession>
<accession>C8KIL8</accession>
<accession>C8KIL9</accession>
<accession>C8KIM0</accession>
<accession>D3DSV3</accession>
<accession>Q7Z5C9</accession>
<accession>Q9NP63</accession>
<evidence type="ECO:0000250" key="1">
    <source>
        <dbReference type="UniProtKB" id="P47791"/>
    </source>
</evidence>
<evidence type="ECO:0000255" key="2"/>
<evidence type="ECO:0000269" key="3">
    <source>
    </source>
</evidence>
<evidence type="ECO:0000269" key="4">
    <source>
    </source>
</evidence>
<evidence type="ECO:0000269" key="5">
    <source>
    </source>
</evidence>
<evidence type="ECO:0000269" key="6">
    <source>
    </source>
</evidence>
<evidence type="ECO:0000269" key="7">
    <source>
    </source>
</evidence>
<evidence type="ECO:0000269" key="8">
    <source>
    </source>
</evidence>
<evidence type="ECO:0000269" key="9">
    <source>
    </source>
</evidence>
<evidence type="ECO:0000269" key="10">
    <source>
    </source>
</evidence>
<evidence type="ECO:0000269" key="11">
    <source ref="3"/>
</evidence>
<evidence type="ECO:0000303" key="12">
    <source>
    </source>
</evidence>
<evidence type="ECO:0000303" key="13">
    <source>
    </source>
</evidence>
<evidence type="ECO:0000305" key="14"/>
<evidence type="ECO:0007744" key="15">
    <source>
        <dbReference type="PDB" id="1BWC"/>
    </source>
</evidence>
<evidence type="ECO:0007744" key="16">
    <source>
        <dbReference type="PDB" id="1DNC"/>
    </source>
</evidence>
<evidence type="ECO:0007744" key="17">
    <source>
        <dbReference type="PDB" id="1GRA"/>
    </source>
</evidence>
<evidence type="ECO:0007744" key="18">
    <source>
        <dbReference type="PDB" id="1GRB"/>
    </source>
</evidence>
<evidence type="ECO:0007744" key="19">
    <source>
        <dbReference type="PDB" id="1GRE"/>
    </source>
</evidence>
<evidence type="ECO:0007744" key="20">
    <source>
        <dbReference type="PDB" id="1GRF"/>
    </source>
</evidence>
<evidence type="ECO:0007744" key="21">
    <source>
        <dbReference type="PDB" id="1GRG"/>
    </source>
</evidence>
<evidence type="ECO:0007744" key="22">
    <source>
        <dbReference type="PDB" id="1GRH"/>
    </source>
</evidence>
<evidence type="ECO:0007744" key="23">
    <source>
        <dbReference type="PDB" id="1GRT"/>
    </source>
</evidence>
<evidence type="ECO:0007744" key="24">
    <source>
        <dbReference type="PDB" id="1GSN"/>
    </source>
</evidence>
<evidence type="ECO:0007744" key="25">
    <source>
        <dbReference type="PDB" id="1K4Q"/>
    </source>
</evidence>
<evidence type="ECO:0007744" key="26">
    <source>
        <dbReference type="PDB" id="1XAN"/>
    </source>
</evidence>
<evidence type="ECO:0007744" key="27">
    <source>
        <dbReference type="PDB" id="2AAQ"/>
    </source>
</evidence>
<evidence type="ECO:0007744" key="28">
    <source>
        <dbReference type="PDB" id="2GH5"/>
    </source>
</evidence>
<evidence type="ECO:0007744" key="29">
    <source>
        <dbReference type="PDB" id="2GRT"/>
    </source>
</evidence>
<evidence type="ECO:0007744" key="30">
    <source>
        <dbReference type="PDB" id="3DJG"/>
    </source>
</evidence>
<evidence type="ECO:0007744" key="31">
    <source>
        <dbReference type="PDB" id="3DJJ"/>
    </source>
</evidence>
<evidence type="ECO:0007744" key="32">
    <source>
        <dbReference type="PDB" id="3DK4"/>
    </source>
</evidence>
<evidence type="ECO:0007744" key="33">
    <source>
        <dbReference type="PDB" id="3DK8"/>
    </source>
</evidence>
<evidence type="ECO:0007744" key="34">
    <source>
        <dbReference type="PDB" id="3DK9"/>
    </source>
</evidence>
<evidence type="ECO:0007744" key="35">
    <source>
        <dbReference type="PDB" id="3GRS"/>
    </source>
</evidence>
<evidence type="ECO:0007744" key="36">
    <source>
        <dbReference type="PDB" id="3GRT"/>
    </source>
</evidence>
<evidence type="ECO:0007744" key="37">
    <source>
        <dbReference type="PDB" id="3SQP"/>
    </source>
</evidence>
<evidence type="ECO:0007744" key="38">
    <source>
        <dbReference type="PDB" id="4GR1"/>
    </source>
</evidence>
<evidence type="ECO:0007744" key="39">
    <source>
        <dbReference type="PDB" id="4GRT"/>
    </source>
</evidence>
<evidence type="ECO:0007744" key="40">
    <source>
        <dbReference type="PDB" id="5GRT"/>
    </source>
</evidence>
<evidence type="ECO:0007829" key="41">
    <source>
        <dbReference type="PDB" id="1GSN"/>
    </source>
</evidence>
<evidence type="ECO:0007829" key="42">
    <source>
        <dbReference type="PDB" id="3DK9"/>
    </source>
</evidence>
<evidence type="ECO:0007829" key="43">
    <source>
        <dbReference type="PDB" id="3GRS"/>
    </source>
</evidence>
<dbReference type="EC" id="1.8.1.7" evidence="4"/>
<dbReference type="EMBL" id="X15722">
    <property type="protein sequence ID" value="CAA33744.1"/>
    <property type="molecule type" value="mRNA"/>
</dbReference>
<dbReference type="EMBL" id="AF228703">
    <property type="protein sequence ID" value="AAF37572.1"/>
    <property type="molecule type" value="Genomic_DNA"/>
</dbReference>
<dbReference type="EMBL" id="AF228703">
    <property type="protein sequence ID" value="AAF37573.1"/>
    <property type="molecule type" value="Genomic_DNA"/>
</dbReference>
<dbReference type="EMBL" id="AF228704">
    <property type="protein sequence ID" value="AAF37574.1"/>
    <property type="molecule type" value="mRNA"/>
</dbReference>
<dbReference type="EMBL" id="AY338490">
    <property type="protein sequence ID" value="AAP88037.1"/>
    <property type="status" value="ALT_INIT"/>
    <property type="molecule type" value="Genomic_DNA"/>
</dbReference>
<dbReference type="EMBL" id="AB519179">
    <property type="protein sequence ID" value="BAI43437.1"/>
    <property type="molecule type" value="mRNA"/>
</dbReference>
<dbReference type="EMBL" id="AB519180">
    <property type="protein sequence ID" value="BAI43438.1"/>
    <property type="molecule type" value="mRNA"/>
</dbReference>
<dbReference type="EMBL" id="AB519181">
    <property type="protein sequence ID" value="BAI43439.1"/>
    <property type="molecule type" value="mRNA"/>
</dbReference>
<dbReference type="EMBL" id="AC009314">
    <property type="status" value="NOT_ANNOTATED_CDS"/>
    <property type="molecule type" value="Genomic_DNA"/>
</dbReference>
<dbReference type="EMBL" id="AC103959">
    <property type="status" value="NOT_ANNOTATED_CDS"/>
    <property type="molecule type" value="Genomic_DNA"/>
</dbReference>
<dbReference type="EMBL" id="AF215848">
    <property type="status" value="NOT_ANNOTATED_CDS"/>
    <property type="molecule type" value="Genomic_DNA"/>
</dbReference>
<dbReference type="EMBL" id="CH471080">
    <property type="protein sequence ID" value="EAW63443.1"/>
    <property type="molecule type" value="Genomic_DNA"/>
</dbReference>
<dbReference type="EMBL" id="CH471080">
    <property type="protein sequence ID" value="EAW63445.1"/>
    <property type="molecule type" value="Genomic_DNA"/>
</dbReference>
<dbReference type="EMBL" id="BC069244">
    <property type="protein sequence ID" value="AAH69244.1"/>
    <property type="molecule type" value="mRNA"/>
</dbReference>
<dbReference type="CCDS" id="CCDS34877.1">
    <molecule id="P00390-1"/>
</dbReference>
<dbReference type="CCDS" id="CCDS56530.1">
    <molecule id="P00390-5"/>
</dbReference>
<dbReference type="CCDS" id="CCDS56531.1">
    <molecule id="P00390-3"/>
</dbReference>
<dbReference type="CCDS" id="CCDS56532.1">
    <molecule id="P00390-4"/>
</dbReference>
<dbReference type="PIR" id="S08979">
    <property type="entry name" value="RDHUU"/>
</dbReference>
<dbReference type="RefSeq" id="NP_000628.2">
    <molecule id="P00390-1"/>
    <property type="nucleotide sequence ID" value="NM_000637.5"/>
</dbReference>
<dbReference type="RefSeq" id="NP_001182031.1">
    <molecule id="P00390-3"/>
    <property type="nucleotide sequence ID" value="NM_001195102.3"/>
</dbReference>
<dbReference type="RefSeq" id="NP_001182032.1">
    <molecule id="P00390-4"/>
    <property type="nucleotide sequence ID" value="NM_001195103.3"/>
</dbReference>
<dbReference type="RefSeq" id="NP_001182033.1">
    <molecule id="P00390-5"/>
    <property type="nucleotide sequence ID" value="NM_001195104.3"/>
</dbReference>
<dbReference type="PDB" id="1ALG">
    <property type="method" value="NMR"/>
    <property type="chains" value="A=480-503"/>
</dbReference>
<dbReference type="PDB" id="1BWC">
    <property type="method" value="X-ray"/>
    <property type="resolution" value="2.10 A"/>
    <property type="chains" value="A=45-522"/>
</dbReference>
<dbReference type="PDB" id="1DNC">
    <property type="method" value="X-ray"/>
    <property type="resolution" value="1.70 A"/>
    <property type="chains" value="A=45-522"/>
</dbReference>
<dbReference type="PDB" id="1GRA">
    <property type="method" value="X-ray"/>
    <property type="resolution" value="2.00 A"/>
    <property type="chains" value="A=45-522"/>
</dbReference>
<dbReference type="PDB" id="1GRB">
    <property type="method" value="X-ray"/>
    <property type="resolution" value="1.85 A"/>
    <property type="chains" value="A=45-522"/>
</dbReference>
<dbReference type="PDB" id="1GRE">
    <property type="method" value="X-ray"/>
    <property type="resolution" value="2.00 A"/>
    <property type="chains" value="A=45-522"/>
</dbReference>
<dbReference type="PDB" id="1GRF">
    <property type="method" value="X-ray"/>
    <property type="resolution" value="2.00 A"/>
    <property type="chains" value="A=45-522"/>
</dbReference>
<dbReference type="PDB" id="1GRG">
    <property type="method" value="X-ray"/>
    <property type="resolution" value="2.00 A"/>
    <property type="chains" value="A=45-522"/>
</dbReference>
<dbReference type="PDB" id="1GRH">
    <property type="method" value="X-ray"/>
    <property type="resolution" value="3.00 A"/>
    <property type="chains" value="A=45-522"/>
</dbReference>
<dbReference type="PDB" id="1GRT">
    <property type="method" value="X-ray"/>
    <property type="resolution" value="2.30 A"/>
    <property type="chains" value="A=45-522"/>
</dbReference>
<dbReference type="PDB" id="1GSN">
    <property type="method" value="X-ray"/>
    <property type="resolution" value="1.70 A"/>
    <property type="chains" value="A=45-522"/>
</dbReference>
<dbReference type="PDB" id="1K4Q">
    <property type="method" value="X-ray"/>
    <property type="resolution" value="1.90 A"/>
    <property type="chains" value="A=62-522"/>
</dbReference>
<dbReference type="PDB" id="1XAN">
    <property type="method" value="X-ray"/>
    <property type="resolution" value="2.00 A"/>
    <property type="chains" value="A=62-522"/>
</dbReference>
<dbReference type="PDB" id="2AAQ">
    <property type="method" value="X-ray"/>
    <property type="resolution" value="2.60 A"/>
    <property type="chains" value="A=44-522"/>
</dbReference>
<dbReference type="PDB" id="2GH5">
    <property type="method" value="X-ray"/>
    <property type="resolution" value="1.70 A"/>
    <property type="chains" value="A/B=45-522"/>
</dbReference>
<dbReference type="PDB" id="2GRT">
    <property type="method" value="X-ray"/>
    <property type="resolution" value="2.70 A"/>
    <property type="chains" value="A=62-522"/>
</dbReference>
<dbReference type="PDB" id="3DJG">
    <property type="method" value="X-ray"/>
    <property type="resolution" value="1.80 A"/>
    <property type="chains" value="X=45-522"/>
</dbReference>
<dbReference type="PDB" id="3DJJ">
    <property type="method" value="X-ray"/>
    <property type="resolution" value="1.10 A"/>
    <property type="chains" value="A=45-522"/>
</dbReference>
<dbReference type="PDB" id="3DK4">
    <property type="method" value="X-ray"/>
    <property type="resolution" value="1.20 A"/>
    <property type="chains" value="A=45-522"/>
</dbReference>
<dbReference type="PDB" id="3DK8">
    <property type="method" value="X-ray"/>
    <property type="resolution" value="1.10 A"/>
    <property type="chains" value="A=45-522"/>
</dbReference>
<dbReference type="PDB" id="3DK9">
    <property type="method" value="X-ray"/>
    <property type="resolution" value="0.95 A"/>
    <property type="chains" value="A=45-522"/>
</dbReference>
<dbReference type="PDB" id="3GRS">
    <property type="method" value="X-ray"/>
    <property type="resolution" value="1.54 A"/>
    <property type="chains" value="A=45-522"/>
</dbReference>
<dbReference type="PDB" id="3GRT">
    <property type="method" value="X-ray"/>
    <property type="resolution" value="2.50 A"/>
    <property type="chains" value="A=62-522"/>
</dbReference>
<dbReference type="PDB" id="3SQP">
    <property type="method" value="X-ray"/>
    <property type="resolution" value="2.21 A"/>
    <property type="chains" value="A/B=45-522"/>
</dbReference>
<dbReference type="PDB" id="4GR1">
    <property type="method" value="X-ray"/>
    <property type="resolution" value="2.40 A"/>
    <property type="chains" value="A=45-522"/>
</dbReference>
<dbReference type="PDB" id="4GRT">
    <property type="method" value="X-ray"/>
    <property type="resolution" value="2.80 A"/>
    <property type="chains" value="A=62-522"/>
</dbReference>
<dbReference type="PDB" id="5GRT">
    <property type="method" value="X-ray"/>
    <property type="resolution" value="2.40 A"/>
    <property type="chains" value="A=62-522"/>
</dbReference>
<dbReference type="PDBsum" id="1ALG"/>
<dbReference type="PDBsum" id="1BWC"/>
<dbReference type="PDBsum" id="1DNC"/>
<dbReference type="PDBsum" id="1GRA"/>
<dbReference type="PDBsum" id="1GRB"/>
<dbReference type="PDBsum" id="1GRE"/>
<dbReference type="PDBsum" id="1GRF"/>
<dbReference type="PDBsum" id="1GRG"/>
<dbReference type="PDBsum" id="1GRH"/>
<dbReference type="PDBsum" id="1GRT"/>
<dbReference type="PDBsum" id="1GSN"/>
<dbReference type="PDBsum" id="1K4Q"/>
<dbReference type="PDBsum" id="1XAN"/>
<dbReference type="PDBsum" id="2AAQ"/>
<dbReference type="PDBsum" id="2GH5"/>
<dbReference type="PDBsum" id="2GRT"/>
<dbReference type="PDBsum" id="3DJG"/>
<dbReference type="PDBsum" id="3DJJ"/>
<dbReference type="PDBsum" id="3DK4"/>
<dbReference type="PDBsum" id="3DK8"/>
<dbReference type="PDBsum" id="3DK9"/>
<dbReference type="PDBsum" id="3GRS"/>
<dbReference type="PDBsum" id="3GRT"/>
<dbReference type="PDBsum" id="3SQP"/>
<dbReference type="PDBsum" id="4GR1"/>
<dbReference type="PDBsum" id="4GRT"/>
<dbReference type="PDBsum" id="5GRT"/>
<dbReference type="SMR" id="P00390"/>
<dbReference type="BioGRID" id="109191">
    <property type="interactions" value="106"/>
</dbReference>
<dbReference type="CORUM" id="P00390"/>
<dbReference type="FunCoup" id="P00390">
    <property type="interactions" value="1505"/>
</dbReference>
<dbReference type="IntAct" id="P00390">
    <property type="interactions" value="11"/>
</dbReference>
<dbReference type="MINT" id="P00390"/>
<dbReference type="STRING" id="9606.ENSP00000221130"/>
<dbReference type="BindingDB" id="P00390"/>
<dbReference type="ChEMBL" id="CHEMBL2755"/>
<dbReference type="DrugBank" id="DB07393">
    <property type="generic name" value="2-(2-PHENYL-3-PYRIDIN-2-YL-4,5,6,7-TETRAHYDRO-2H-ISOPHOSPHINDOL-1-YL)PYRIDINE"/>
</dbReference>
<dbReference type="DrugBank" id="DB01644">
    <property type="generic name" value="3,6-dihydroxy-xanthene-9-propionic acid"/>
</dbReference>
<dbReference type="DrugBank" id="DB02895">
    <property type="generic name" value="3-(Prop-2-Ene-1-Sulfinyl)-Propene-1-Thiol"/>
</dbReference>
<dbReference type="DrugBank" id="DB03867">
    <property type="generic name" value="3-nitro-L-tyrosine"/>
</dbReference>
<dbReference type="DrugBank" id="DB02153">
    <property type="generic name" value="3-sulfino-L-alanine"/>
</dbReference>
<dbReference type="DrugBank" id="DB07714">
    <property type="generic name" value="6-(3-METHYL-1,4-DIOXO-1,4-DIHYDRONAPHTHALEN-2-YL)HEXANOIC ACID"/>
</dbReference>
<dbReference type="DrugBank" id="DB09061">
    <property type="generic name" value="Cannabidiol"/>
</dbReference>
<dbReference type="DrugBank" id="DB00262">
    <property type="generic name" value="Carmustine"/>
</dbReference>
<dbReference type="DrugBank" id="DB09130">
    <property type="generic name" value="Copper"/>
</dbReference>
<dbReference type="DrugBank" id="DB03147">
    <property type="generic name" value="Flavin adenine dinucleotide"/>
</dbReference>
<dbReference type="DrugBank" id="DB00143">
    <property type="generic name" value="Glutathione"/>
</dbReference>
<dbReference type="DrugBank" id="DB03310">
    <property type="generic name" value="Glutathione disulfide"/>
</dbReference>
<dbReference type="DrugBank" id="DB02553">
    <property type="generic name" value="Glutathionylspermidine disulfide"/>
</dbReference>
<dbReference type="DrugBank" id="DB14009">
    <property type="generic name" value="Medical Cannabis"/>
</dbReference>
<dbReference type="DrugBank" id="DB14011">
    <property type="generic name" value="Nabiximols"/>
</dbReference>
<dbReference type="DrugBank" id="DB00157">
    <property type="generic name" value="NADH"/>
</dbReference>
<dbReference type="DrugBank" id="DB14128">
    <property type="generic name" value="Nadide"/>
</dbReference>
<dbReference type="DrugBank" id="DB11135">
    <property type="generic name" value="Selenium"/>
</dbReference>
<dbReference type="DrugBank" id="DB11590">
    <property type="generic name" value="Thimerosal"/>
</dbReference>
<dbReference type="DrugCentral" id="P00390"/>
<dbReference type="CarbonylDB" id="P00390"/>
<dbReference type="GlyGen" id="P00390">
    <property type="glycosylation" value="1 site, 1 O-linked glycan (1 site)"/>
</dbReference>
<dbReference type="iPTMnet" id="P00390"/>
<dbReference type="PhosphoSitePlus" id="P00390"/>
<dbReference type="SwissPalm" id="P00390"/>
<dbReference type="BioMuta" id="GSR"/>
<dbReference type="DMDM" id="14916998"/>
<dbReference type="REPRODUCTION-2DPAGE" id="IPI00759575"/>
<dbReference type="jPOST" id="P00390"/>
<dbReference type="MassIVE" id="P00390"/>
<dbReference type="PaxDb" id="9606-ENSP00000221130"/>
<dbReference type="PeptideAtlas" id="P00390"/>
<dbReference type="ProteomicsDB" id="51241">
    <molecule id="P00390-1"/>
</dbReference>
<dbReference type="ProteomicsDB" id="51242">
    <molecule id="P00390-2"/>
</dbReference>
<dbReference type="ProteomicsDB" id="51243">
    <molecule id="P00390-3"/>
</dbReference>
<dbReference type="ProteomicsDB" id="51244">
    <molecule id="P00390-4"/>
</dbReference>
<dbReference type="ProteomicsDB" id="51245">
    <molecule id="P00390-5"/>
</dbReference>
<dbReference type="Pumba" id="P00390"/>
<dbReference type="Antibodypedia" id="787">
    <property type="antibodies" value="458 antibodies from 36 providers"/>
</dbReference>
<dbReference type="DNASU" id="2936"/>
<dbReference type="Ensembl" id="ENST00000221130.11">
    <molecule id="P00390-1"/>
    <property type="protein sequence ID" value="ENSP00000221130.5"/>
    <property type="gene ID" value="ENSG00000104687.14"/>
</dbReference>
<dbReference type="Ensembl" id="ENST00000537535.5">
    <molecule id="P00390-5"/>
    <property type="protein sequence ID" value="ENSP00000438845.1"/>
    <property type="gene ID" value="ENSG00000104687.14"/>
</dbReference>
<dbReference type="Ensembl" id="ENST00000541648.5">
    <molecule id="P00390-4"/>
    <property type="protein sequence ID" value="ENSP00000444559.1"/>
    <property type="gene ID" value="ENSG00000104687.14"/>
</dbReference>
<dbReference type="Ensembl" id="ENST00000546342.5">
    <molecule id="P00390-3"/>
    <property type="protein sequence ID" value="ENSP00000445516.1"/>
    <property type="gene ID" value="ENSG00000104687.14"/>
</dbReference>
<dbReference type="GeneID" id="2936"/>
<dbReference type="KEGG" id="hsa:2936"/>
<dbReference type="MANE-Select" id="ENST00000221130.11">
    <property type="protein sequence ID" value="ENSP00000221130.5"/>
    <property type="RefSeq nucleotide sequence ID" value="NM_000637.5"/>
    <property type="RefSeq protein sequence ID" value="NP_000628.2"/>
</dbReference>
<dbReference type="UCSC" id="uc022ato.2">
    <molecule id="P00390-1"/>
    <property type="organism name" value="human"/>
</dbReference>
<dbReference type="AGR" id="HGNC:4623"/>
<dbReference type="CTD" id="2936"/>
<dbReference type="DisGeNET" id="2936"/>
<dbReference type="GeneCards" id="GSR"/>
<dbReference type="HGNC" id="HGNC:4623">
    <property type="gene designation" value="GSR"/>
</dbReference>
<dbReference type="HPA" id="ENSG00000104687">
    <property type="expression patterns" value="Low tissue specificity"/>
</dbReference>
<dbReference type="MalaCards" id="GSR"/>
<dbReference type="MIM" id="138300">
    <property type="type" value="gene"/>
</dbReference>
<dbReference type="MIM" id="618660">
    <property type="type" value="phenotype"/>
</dbReference>
<dbReference type="neXtProt" id="NX_P00390"/>
<dbReference type="OpenTargets" id="ENSG00000104687"/>
<dbReference type="Orphanet" id="90030">
    <property type="disease" value="Hemolytic anemia due to glutathione reductase deficiency"/>
</dbReference>
<dbReference type="PharmGKB" id="PA29014"/>
<dbReference type="VEuPathDB" id="HostDB:ENSG00000104687"/>
<dbReference type="eggNOG" id="KOG0405">
    <property type="taxonomic scope" value="Eukaryota"/>
</dbReference>
<dbReference type="GeneTree" id="ENSGT00940000156986"/>
<dbReference type="HOGENOM" id="CLU_016755_2_2_1"/>
<dbReference type="InParanoid" id="P00390"/>
<dbReference type="OMA" id="MSKHYDY"/>
<dbReference type="OrthoDB" id="5956163at2759"/>
<dbReference type="PAN-GO" id="P00390">
    <property type="GO annotations" value="7 GO annotations based on evolutionary models"/>
</dbReference>
<dbReference type="PhylomeDB" id="P00390"/>
<dbReference type="TreeFam" id="TF105353"/>
<dbReference type="BioCyc" id="MetaCyc:HS02602-MONOMER"/>
<dbReference type="BRENDA" id="1.8.1.7">
    <property type="organism ID" value="2681"/>
</dbReference>
<dbReference type="PathwayCommons" id="P00390"/>
<dbReference type="Reactome" id="R-HSA-2408550">
    <molecule id="P00390-2"/>
    <property type="pathway name" value="Metabolism of ingested H2SeO4 and H2SeO3 into H2Se"/>
</dbReference>
<dbReference type="Reactome" id="R-HSA-3299685">
    <property type="pathway name" value="Detoxification of Reactive Oxygen Species"/>
</dbReference>
<dbReference type="Reactome" id="R-HSA-499943">
    <molecule id="P00390-2"/>
    <property type="pathway name" value="Interconversion of nucleotide di- and triphosphates"/>
</dbReference>
<dbReference type="Reactome" id="R-HSA-5628897">
    <molecule id="P00390-2"/>
    <property type="pathway name" value="TP53 Regulates Metabolic Genes"/>
</dbReference>
<dbReference type="Reactome" id="R-HSA-9818027">
    <molecule id="P00390-2"/>
    <property type="pathway name" value="NFE2L2 regulating anti-oxidant/detoxification enzymes"/>
</dbReference>
<dbReference type="SABIO-RK" id="P00390"/>
<dbReference type="SignaLink" id="P00390"/>
<dbReference type="SIGNOR" id="P00390"/>
<dbReference type="BioGRID-ORCS" id="2936">
    <property type="hits" value="14 hits in 1168 CRISPR screens"/>
</dbReference>
<dbReference type="ChiTaRS" id="GSR">
    <property type="organism name" value="human"/>
</dbReference>
<dbReference type="EvolutionaryTrace" id="P00390"/>
<dbReference type="GeneWiki" id="Glutathione_reductase"/>
<dbReference type="GenomeRNAi" id="2936"/>
<dbReference type="Pharos" id="P00390">
    <property type="development level" value="Tclin"/>
</dbReference>
<dbReference type="PRO" id="PR:P00390"/>
<dbReference type="Proteomes" id="UP000005640">
    <property type="component" value="Chromosome 8"/>
</dbReference>
<dbReference type="RNAct" id="P00390">
    <property type="molecule type" value="protein"/>
</dbReference>
<dbReference type="Bgee" id="ENSG00000104687">
    <property type="expression patterns" value="Expressed in pylorus and 193 other cell types or tissues"/>
</dbReference>
<dbReference type="ExpressionAtlas" id="P00390">
    <property type="expression patterns" value="baseline and differential"/>
</dbReference>
<dbReference type="GO" id="GO:0005829">
    <property type="term" value="C:cytosol"/>
    <property type="evidence" value="ECO:0000314"/>
    <property type="project" value="HPA"/>
</dbReference>
<dbReference type="GO" id="GO:0009897">
    <property type="term" value="C:external side of plasma membrane"/>
    <property type="evidence" value="ECO:0007669"/>
    <property type="project" value="Ensembl"/>
</dbReference>
<dbReference type="GO" id="GO:0070062">
    <property type="term" value="C:extracellular exosome"/>
    <property type="evidence" value="ECO:0007005"/>
    <property type="project" value="UniProtKB"/>
</dbReference>
<dbReference type="GO" id="GO:0005759">
    <property type="term" value="C:mitochondrial matrix"/>
    <property type="evidence" value="ECO:0000304"/>
    <property type="project" value="Reactome"/>
</dbReference>
<dbReference type="GO" id="GO:0005739">
    <property type="term" value="C:mitochondrion"/>
    <property type="evidence" value="ECO:0006056"/>
    <property type="project" value="FlyBase"/>
</dbReference>
<dbReference type="GO" id="GO:0009055">
    <property type="term" value="F:electron transfer activity"/>
    <property type="evidence" value="ECO:0000304"/>
    <property type="project" value="UniProtKB"/>
</dbReference>
<dbReference type="GO" id="GO:0050660">
    <property type="term" value="F:flavin adenine dinucleotide binding"/>
    <property type="evidence" value="ECO:0000318"/>
    <property type="project" value="GO_Central"/>
</dbReference>
<dbReference type="GO" id="GO:0004362">
    <property type="term" value="F:glutathione-disulfide reductase (NADPH) activity"/>
    <property type="evidence" value="ECO:0000318"/>
    <property type="project" value="GO_Central"/>
</dbReference>
<dbReference type="GO" id="GO:0050661">
    <property type="term" value="F:NADP binding"/>
    <property type="evidence" value="ECO:0007669"/>
    <property type="project" value="InterPro"/>
</dbReference>
<dbReference type="GO" id="GO:0045454">
    <property type="term" value="P:cell redox homeostasis"/>
    <property type="evidence" value="ECO:0000318"/>
    <property type="project" value="GO_Central"/>
</dbReference>
<dbReference type="GO" id="GO:0034599">
    <property type="term" value="P:cellular response to oxidative stress"/>
    <property type="evidence" value="ECO:0000318"/>
    <property type="project" value="GO_Central"/>
</dbReference>
<dbReference type="GO" id="GO:0006749">
    <property type="term" value="P:glutathione metabolic process"/>
    <property type="evidence" value="ECO:0000318"/>
    <property type="project" value="GO_Central"/>
</dbReference>
<dbReference type="FunFam" id="3.30.390.30:FF:000003">
    <property type="entry name" value="Glutathione reductase"/>
    <property type="match status" value="1"/>
</dbReference>
<dbReference type="FunFam" id="3.50.50.60:FF:000484">
    <property type="entry name" value="Glutathione reductase, mitochondrial"/>
    <property type="match status" value="1"/>
</dbReference>
<dbReference type="FunFam" id="3.50.50.60:FF:000671">
    <property type="entry name" value="Thioredoxin reductase 2, tandem duplicate 1"/>
    <property type="match status" value="1"/>
</dbReference>
<dbReference type="Gene3D" id="3.30.390.30">
    <property type="match status" value="1"/>
</dbReference>
<dbReference type="Gene3D" id="3.50.50.60">
    <property type="entry name" value="FAD/NAD(P)-binding domain"/>
    <property type="match status" value="2"/>
</dbReference>
<dbReference type="InterPro" id="IPR036188">
    <property type="entry name" value="FAD/NAD-bd_sf"/>
</dbReference>
<dbReference type="InterPro" id="IPR023753">
    <property type="entry name" value="FAD/NAD-binding_dom"/>
</dbReference>
<dbReference type="InterPro" id="IPR016156">
    <property type="entry name" value="FAD/NAD-linked_Rdtase_dimer_sf"/>
</dbReference>
<dbReference type="InterPro" id="IPR006322">
    <property type="entry name" value="Glutathione_Rdtase_euk/bac"/>
</dbReference>
<dbReference type="InterPro" id="IPR046952">
    <property type="entry name" value="GSHR/TRXR-like"/>
</dbReference>
<dbReference type="InterPro" id="IPR001100">
    <property type="entry name" value="Pyr_nuc-diS_OxRdtase"/>
</dbReference>
<dbReference type="InterPro" id="IPR004099">
    <property type="entry name" value="Pyr_nucl-diS_OxRdtase_dimer"/>
</dbReference>
<dbReference type="InterPro" id="IPR012999">
    <property type="entry name" value="Pyr_OxRdtase_I_AS"/>
</dbReference>
<dbReference type="NCBIfam" id="TIGR01421">
    <property type="entry name" value="gluta_reduc_1"/>
    <property type="match status" value="1"/>
</dbReference>
<dbReference type="NCBIfam" id="NF004776">
    <property type="entry name" value="PRK06116.1"/>
    <property type="match status" value="1"/>
</dbReference>
<dbReference type="PANTHER" id="PTHR42737">
    <property type="entry name" value="GLUTATHIONE REDUCTASE"/>
    <property type="match status" value="1"/>
</dbReference>
<dbReference type="PANTHER" id="PTHR42737:SF5">
    <property type="entry name" value="GLUTATHIONE REDUCTASE, MITOCHONDRIAL"/>
    <property type="match status" value="1"/>
</dbReference>
<dbReference type="Pfam" id="PF07992">
    <property type="entry name" value="Pyr_redox_2"/>
    <property type="match status" value="1"/>
</dbReference>
<dbReference type="Pfam" id="PF02852">
    <property type="entry name" value="Pyr_redox_dim"/>
    <property type="match status" value="1"/>
</dbReference>
<dbReference type="PIRSF" id="PIRSF000350">
    <property type="entry name" value="Mercury_reductase_MerA"/>
    <property type="match status" value="1"/>
</dbReference>
<dbReference type="PRINTS" id="PR00368">
    <property type="entry name" value="FADPNR"/>
</dbReference>
<dbReference type="PRINTS" id="PR00411">
    <property type="entry name" value="PNDRDTASEI"/>
</dbReference>
<dbReference type="SUPFAM" id="SSF51905">
    <property type="entry name" value="FAD/NAD(P)-binding domain"/>
    <property type="match status" value="1"/>
</dbReference>
<dbReference type="SUPFAM" id="SSF55424">
    <property type="entry name" value="FAD/NAD-linked reductases, dimerisation (C-terminal) domain"/>
    <property type="match status" value="1"/>
</dbReference>
<dbReference type="PROSITE" id="PS00076">
    <property type="entry name" value="PYRIDINE_REDOX_1"/>
    <property type="match status" value="1"/>
</dbReference>
<comment type="function">
    <text evidence="4">Catalyzes the reduction of glutathione disulfide (GSSG) to reduced glutathione (GSH). Constitutes the major mechanism to maintain a high GSH:GSSG ratio in the cytosol.</text>
</comment>
<comment type="catalytic activity">
    <reaction evidence="4">
        <text>2 glutathione + NADP(+) = glutathione disulfide + NADPH + H(+)</text>
        <dbReference type="Rhea" id="RHEA:11740"/>
        <dbReference type="ChEBI" id="CHEBI:15378"/>
        <dbReference type="ChEBI" id="CHEBI:57783"/>
        <dbReference type="ChEBI" id="CHEBI:57925"/>
        <dbReference type="ChEBI" id="CHEBI:58297"/>
        <dbReference type="ChEBI" id="CHEBI:58349"/>
        <dbReference type="EC" id="1.8.1.7"/>
    </reaction>
</comment>
<comment type="cofactor">
    <cofactor evidence="3 5 6 7 8 9 10">
        <name>FAD</name>
        <dbReference type="ChEBI" id="CHEBI:57692"/>
    </cofactor>
    <text evidence="3 5 6 7 8 9 10">Binds 1 FAD per subunit.</text>
</comment>
<comment type="subunit">
    <text evidence="8">Homodimer; disulfide-linked.</text>
</comment>
<comment type="subcellular location">
    <molecule>Isoform Mitochondrial</molecule>
    <subcellularLocation>
        <location>Mitochondrion</location>
    </subcellularLocation>
</comment>
<comment type="subcellular location">
    <molecule>Isoform Cytoplasmic</molecule>
    <subcellularLocation>
        <location>Cytoplasm</location>
    </subcellularLocation>
</comment>
<comment type="alternative products">
    <event type="alternative splicing"/>
    <event type="alternative initiation"/>
    <isoform>
        <id>P00390-1</id>
        <name>Mitochondrial</name>
        <sequence type="displayed"/>
    </isoform>
    <isoform>
        <id>P00390-2</id>
        <name>Cytoplasmic</name>
        <sequence type="described" ref="VSP_018972"/>
    </isoform>
    <isoform>
        <id>P00390-3</id>
        <name>2</name>
        <name>delta8</name>
        <sequence type="described" ref="VSP_042908"/>
    </isoform>
    <isoform>
        <id>P00390-4</id>
        <name>3</name>
        <name>delta9</name>
        <sequence type="described" ref="VSP_042909"/>
    </isoform>
    <isoform>
        <id>P00390-5</id>
        <name>4</name>
        <name>delta8+9</name>
        <sequence type="described" ref="VSP_042908 VSP_042909"/>
    </isoform>
</comment>
<comment type="domain">
    <text>Each subunit can be divided into 4 domains that are consecutive along the polypeptide chain. Domains 1 and 2 bind FAD and NADPH, respectively. Domain 4 forms the interface.</text>
</comment>
<comment type="disease" evidence="4">
    <disease id="DI-05704">
        <name>Anemia, congenital, non-spherocytic hemolytic, 10</name>
        <acronym>CNSHA10</acronym>
        <description>An autosomal recessive disease characterized by hemolytic anemia and impaired activity of glutathione reductase. Patients experience hemolytic anemia in response to oxidative stress or ingestion of fava beans.</description>
        <dbReference type="MIM" id="618660"/>
    </disease>
    <text>The disease is caused by variants affecting the gene represented in this entry.</text>
</comment>
<comment type="miscellaneous">
    <text evidence="3 5 6 7 8 9 10">The active site is a redox-active disulfide bond.</text>
</comment>
<comment type="miscellaneous">
    <molecule>Isoform Cytoplasmic</molecule>
    <text evidence="14">Produced by alternative initiation of isoform Mitochondrial.</text>
</comment>
<comment type="miscellaneous">
    <molecule>Isoform 3</molecule>
    <text evidence="14">Expressed at very high levels in peripheral blood.</text>
</comment>
<comment type="similarity">
    <text evidence="14">Belongs to the class-I pyridine nucleotide-disulfide oxidoreductase family.</text>
</comment>
<comment type="sequence caution" evidence="14">
    <conflict type="erroneous initiation">
        <sequence resource="EMBL-CDS" id="AAP88037"/>
    </conflict>
</comment>
<comment type="online information" name="Wikipedia">
    <link uri="https://en.wikipedia.org/wiki/Glutathione_reductase"/>
    <text>Glutathione reductase entry</text>
</comment>
<organism>
    <name type="scientific">Homo sapiens</name>
    <name type="common">Human</name>
    <dbReference type="NCBI Taxonomy" id="9606"/>
    <lineage>
        <taxon>Eukaryota</taxon>
        <taxon>Metazoa</taxon>
        <taxon>Chordata</taxon>
        <taxon>Craniata</taxon>
        <taxon>Vertebrata</taxon>
        <taxon>Euteleostomi</taxon>
        <taxon>Mammalia</taxon>
        <taxon>Eutheria</taxon>
        <taxon>Euarchontoglires</taxon>
        <taxon>Primates</taxon>
        <taxon>Haplorrhini</taxon>
        <taxon>Catarrhini</taxon>
        <taxon>Hominidae</taxon>
        <taxon>Homo</taxon>
    </lineage>
</organism>
<keyword id="KW-0002">3D-structure</keyword>
<keyword id="KW-0007">Acetylation</keyword>
<keyword id="KW-0024">Alternative initiation</keyword>
<keyword id="KW-0025">Alternative splicing</keyword>
<keyword id="KW-0963">Cytoplasm</keyword>
<keyword id="KW-0903">Direct protein sequencing</keyword>
<keyword id="KW-0225">Disease variant</keyword>
<keyword id="KW-1015">Disulfide bond</keyword>
<keyword id="KW-0274">FAD</keyword>
<keyword id="KW-0285">Flavoprotein</keyword>
<keyword id="KW-0360">Hereditary hemolytic anemia</keyword>
<keyword id="KW-0496">Mitochondrion</keyword>
<keyword id="KW-0521">NADP</keyword>
<keyword id="KW-0560">Oxidoreductase</keyword>
<keyword id="KW-1267">Proteomics identification</keyword>
<keyword id="KW-0676">Redox-active center</keyword>
<keyword id="KW-1185">Reference proteome</keyword>
<keyword id="KW-0809">Transit peptide</keyword>
<name>GSHR_HUMAN</name>
<sequence>MALLPRALSAGAGPSWRRAARAFRGFLLLLPEPAALTRALSRAMACRQEPQPQGPPPAAGAVASYDYLVIGGGSGGLASARRAAELGARAAVVESHKLGGTCVNVGCVPKKVMWNTAVHSEFMHDHADYGFPSCEGKFNWRVIKEKRDAYVSRLNAIYQNNLTKSHIEIIRGHAAFTSDPKPTIEVSGKKYTAPHILIATGGMPSTPHESQIPGASLGITSDGFFQLEELPGRSVIVGAGYIAVEMAGILSALGSKTSLMIRHDKVLRSFDSMISTNCTEELENAGVEVLKFSQVKEVKKTLSGLEVSMVTAVPGRLPVMTMIPDVDCLLWAIGRVPNTKDLSLNKLGIQTDDKGHIIVDEFQNTNVKGIYAVGDVCGKALLTPVAIAAGRKLAHRLFEYKEDSKLDYNNIPTVVFSHPPIGTVGLTEDEAIHKYGIENVKTYSTSFTPMYHAVTKRKTKCVMKMVCANKEEKVVGIHMQGLGCDEMLQGFAVAVKMGATKADFDNTVAIHPTSSEELVTLR</sequence>